<comment type="function">
    <text evidence="1">Forms the histone H2A phosphatase complex in association with the regulatory subunits PSY2 and PSY4, which dephosphorylates H2AS128ph (gamma-H2A) that has been displaced from sites of DNA lesions in the double-stranded DNA break repair process. Dephosphorylation is necessary for efficient recovery from the DNA damage checkpoint (By similarity).</text>
</comment>
<comment type="catalytic activity">
    <reaction>
        <text>O-phospho-L-seryl-[protein] + H2O = L-seryl-[protein] + phosphate</text>
        <dbReference type="Rhea" id="RHEA:20629"/>
        <dbReference type="Rhea" id="RHEA-COMP:9863"/>
        <dbReference type="Rhea" id="RHEA-COMP:11604"/>
        <dbReference type="ChEBI" id="CHEBI:15377"/>
        <dbReference type="ChEBI" id="CHEBI:29999"/>
        <dbReference type="ChEBI" id="CHEBI:43474"/>
        <dbReference type="ChEBI" id="CHEBI:83421"/>
        <dbReference type="EC" id="3.1.3.16"/>
    </reaction>
</comment>
<comment type="catalytic activity">
    <reaction>
        <text>O-phospho-L-threonyl-[protein] + H2O = L-threonyl-[protein] + phosphate</text>
        <dbReference type="Rhea" id="RHEA:47004"/>
        <dbReference type="Rhea" id="RHEA-COMP:11060"/>
        <dbReference type="Rhea" id="RHEA-COMP:11605"/>
        <dbReference type="ChEBI" id="CHEBI:15377"/>
        <dbReference type="ChEBI" id="CHEBI:30013"/>
        <dbReference type="ChEBI" id="CHEBI:43474"/>
        <dbReference type="ChEBI" id="CHEBI:61977"/>
        <dbReference type="EC" id="3.1.3.16"/>
    </reaction>
</comment>
<comment type="cofactor">
    <cofactor evidence="1">
        <name>Mn(2+)</name>
        <dbReference type="ChEBI" id="CHEBI:29035"/>
    </cofactor>
    <text evidence="1">Binds 2 manganese ions per subunit.</text>
</comment>
<comment type="subunit">
    <text evidence="1">Catalytic subunit of the histone H2A phosphatase complex (HTP-C) containing PPH3, PSY2 and PSY4.</text>
</comment>
<comment type="subcellular location">
    <subcellularLocation>
        <location evidence="1">Cytoplasm</location>
    </subcellularLocation>
    <subcellularLocation>
        <location evidence="1">Nucleus</location>
    </subcellularLocation>
</comment>
<comment type="similarity">
    <text evidence="2">Belongs to the PPP phosphatase family. PP-4 (PP-X) subfamily.</text>
</comment>
<organism>
    <name type="scientific">Kluyveromyces lactis (strain ATCC 8585 / CBS 2359 / DSM 70799 / NBRC 1267 / NRRL Y-1140 / WM37)</name>
    <name type="common">Yeast</name>
    <name type="synonym">Candida sphaerica</name>
    <dbReference type="NCBI Taxonomy" id="284590"/>
    <lineage>
        <taxon>Eukaryota</taxon>
        <taxon>Fungi</taxon>
        <taxon>Dikarya</taxon>
        <taxon>Ascomycota</taxon>
        <taxon>Saccharomycotina</taxon>
        <taxon>Saccharomycetes</taxon>
        <taxon>Saccharomycetales</taxon>
        <taxon>Saccharomycetaceae</taxon>
        <taxon>Kluyveromyces</taxon>
    </lineage>
</organism>
<sequence>MMKLDEIIETLRQGKHVDEDSIYSLCVMAQELLMNESNVTHVDTPVTICGDIHGQLHDLLTLFAKSGGIEKNRYIFLGDFVDRGFYSLESFLLLVCYKLRYPDRIVLIRGNHETRQITKVYGFYDEVVRKYGNSNVWRYCCEVFDYLPLGAIVNNKVFCVHGGLSPDVLSINEIRTIDRKKEVPHEGAMCDLLWSDPEDVDTWSLSPRGAGFLFGQNEVDKFLHTNSVELIARAHQLVMEGYKEMFDGGLVTVWSAPNYCYRCGNVAAVLRIDDDMTKDYTIFEAVQARDSGGNVILPTKKPQMDYFL</sequence>
<feature type="chain" id="PRO_0000223651" description="Serine/threonine-protein phosphatase 4 catalytic subunit">
    <location>
        <begin position="1"/>
        <end position="308"/>
    </location>
</feature>
<feature type="active site" description="Proton donor" evidence="1">
    <location>
        <position position="112"/>
    </location>
</feature>
<feature type="binding site" evidence="1">
    <location>
        <position position="51"/>
    </location>
    <ligand>
        <name>Mn(2+)</name>
        <dbReference type="ChEBI" id="CHEBI:29035"/>
        <label>1</label>
    </ligand>
</feature>
<feature type="binding site" evidence="1">
    <location>
        <position position="53"/>
    </location>
    <ligand>
        <name>Mn(2+)</name>
        <dbReference type="ChEBI" id="CHEBI:29035"/>
        <label>1</label>
    </ligand>
</feature>
<feature type="binding site" evidence="1">
    <location>
        <position position="79"/>
    </location>
    <ligand>
        <name>Mn(2+)</name>
        <dbReference type="ChEBI" id="CHEBI:29035"/>
        <label>1</label>
    </ligand>
</feature>
<feature type="binding site" evidence="1">
    <location>
        <position position="79"/>
    </location>
    <ligand>
        <name>Mn(2+)</name>
        <dbReference type="ChEBI" id="CHEBI:29035"/>
        <label>2</label>
    </ligand>
</feature>
<feature type="binding site" evidence="1">
    <location>
        <position position="111"/>
    </location>
    <ligand>
        <name>Mn(2+)</name>
        <dbReference type="ChEBI" id="CHEBI:29035"/>
        <label>2</label>
    </ligand>
</feature>
<feature type="binding site" evidence="1">
    <location>
        <position position="161"/>
    </location>
    <ligand>
        <name>Mn(2+)</name>
        <dbReference type="ChEBI" id="CHEBI:29035"/>
        <label>2</label>
    </ligand>
</feature>
<feature type="binding site" evidence="1">
    <location>
        <position position="235"/>
    </location>
    <ligand>
        <name>Mn(2+)</name>
        <dbReference type="ChEBI" id="CHEBI:29035"/>
        <label>2</label>
    </ligand>
</feature>
<feature type="modified residue" description="Leucine methyl ester" evidence="1">
    <location>
        <position position="308"/>
    </location>
</feature>
<gene>
    <name type="primary">PPH3</name>
    <name type="ordered locus">KLLA0E10032g</name>
</gene>
<name>PP4C_KLULA</name>
<accession>Q6CNT6</accession>
<evidence type="ECO:0000250" key="1"/>
<evidence type="ECO:0000305" key="2"/>
<proteinExistence type="inferred from homology"/>
<dbReference type="EC" id="3.1.3.16"/>
<dbReference type="EMBL" id="CR382125">
    <property type="protein sequence ID" value="CAG99490.1"/>
    <property type="molecule type" value="Genomic_DNA"/>
</dbReference>
<dbReference type="RefSeq" id="XP_454403.1">
    <property type="nucleotide sequence ID" value="XM_454403.1"/>
</dbReference>
<dbReference type="SMR" id="Q6CNT6"/>
<dbReference type="FunCoup" id="Q6CNT6">
    <property type="interactions" value="120"/>
</dbReference>
<dbReference type="STRING" id="284590.Q6CNT6"/>
<dbReference type="PaxDb" id="284590-Q6CNT6"/>
<dbReference type="KEGG" id="kla:KLLA0_E10055g"/>
<dbReference type="eggNOG" id="KOG0372">
    <property type="taxonomic scope" value="Eukaryota"/>
</dbReference>
<dbReference type="HOGENOM" id="CLU_004962_8_1_1"/>
<dbReference type="InParanoid" id="Q6CNT6"/>
<dbReference type="OMA" id="LCEIICD"/>
<dbReference type="Proteomes" id="UP000000598">
    <property type="component" value="Chromosome E"/>
</dbReference>
<dbReference type="GO" id="GO:0005737">
    <property type="term" value="C:cytoplasm"/>
    <property type="evidence" value="ECO:0007669"/>
    <property type="project" value="UniProtKB-SubCell"/>
</dbReference>
<dbReference type="GO" id="GO:0005634">
    <property type="term" value="C:nucleus"/>
    <property type="evidence" value="ECO:0007669"/>
    <property type="project" value="UniProtKB-SubCell"/>
</dbReference>
<dbReference type="GO" id="GO:0046872">
    <property type="term" value="F:metal ion binding"/>
    <property type="evidence" value="ECO:0007669"/>
    <property type="project" value="UniProtKB-KW"/>
</dbReference>
<dbReference type="GO" id="GO:0004722">
    <property type="term" value="F:protein serine/threonine phosphatase activity"/>
    <property type="evidence" value="ECO:0007669"/>
    <property type="project" value="UniProtKB-EC"/>
</dbReference>
<dbReference type="CDD" id="cd07415">
    <property type="entry name" value="MPP_PP2A_PP4_PP6"/>
    <property type="match status" value="1"/>
</dbReference>
<dbReference type="FunFam" id="3.60.21.10:FF:000005">
    <property type="entry name" value="Serine/threonine-protein phosphatase"/>
    <property type="match status" value="1"/>
</dbReference>
<dbReference type="Gene3D" id="3.60.21.10">
    <property type="match status" value="1"/>
</dbReference>
<dbReference type="InterPro" id="IPR004843">
    <property type="entry name" value="Calcineurin-like_PHP_ApaH"/>
</dbReference>
<dbReference type="InterPro" id="IPR029052">
    <property type="entry name" value="Metallo-depent_PP-like"/>
</dbReference>
<dbReference type="InterPro" id="IPR047129">
    <property type="entry name" value="PPA2-like"/>
</dbReference>
<dbReference type="InterPro" id="IPR006186">
    <property type="entry name" value="Ser/Thr-sp_prot-phosphatase"/>
</dbReference>
<dbReference type="PANTHER" id="PTHR45619">
    <property type="entry name" value="SERINE/THREONINE-PROTEIN PHOSPHATASE PP2A-RELATED"/>
    <property type="match status" value="1"/>
</dbReference>
<dbReference type="Pfam" id="PF00149">
    <property type="entry name" value="Metallophos"/>
    <property type="match status" value="1"/>
</dbReference>
<dbReference type="PRINTS" id="PR00114">
    <property type="entry name" value="STPHPHTASE"/>
</dbReference>
<dbReference type="SMART" id="SM00156">
    <property type="entry name" value="PP2Ac"/>
    <property type="match status" value="1"/>
</dbReference>
<dbReference type="SUPFAM" id="SSF56300">
    <property type="entry name" value="Metallo-dependent phosphatases"/>
    <property type="match status" value="1"/>
</dbReference>
<dbReference type="PROSITE" id="PS00125">
    <property type="entry name" value="SER_THR_PHOSPHATASE"/>
    <property type="match status" value="1"/>
</dbReference>
<reference key="1">
    <citation type="journal article" date="2004" name="Nature">
        <title>Genome evolution in yeasts.</title>
        <authorList>
            <person name="Dujon B."/>
            <person name="Sherman D."/>
            <person name="Fischer G."/>
            <person name="Durrens P."/>
            <person name="Casaregola S."/>
            <person name="Lafontaine I."/>
            <person name="de Montigny J."/>
            <person name="Marck C."/>
            <person name="Neuveglise C."/>
            <person name="Talla E."/>
            <person name="Goffard N."/>
            <person name="Frangeul L."/>
            <person name="Aigle M."/>
            <person name="Anthouard V."/>
            <person name="Babour A."/>
            <person name="Barbe V."/>
            <person name="Barnay S."/>
            <person name="Blanchin S."/>
            <person name="Beckerich J.-M."/>
            <person name="Beyne E."/>
            <person name="Bleykasten C."/>
            <person name="Boisrame A."/>
            <person name="Boyer J."/>
            <person name="Cattolico L."/>
            <person name="Confanioleri F."/>
            <person name="de Daruvar A."/>
            <person name="Despons L."/>
            <person name="Fabre E."/>
            <person name="Fairhead C."/>
            <person name="Ferry-Dumazet H."/>
            <person name="Groppi A."/>
            <person name="Hantraye F."/>
            <person name="Hennequin C."/>
            <person name="Jauniaux N."/>
            <person name="Joyet P."/>
            <person name="Kachouri R."/>
            <person name="Kerrest A."/>
            <person name="Koszul R."/>
            <person name="Lemaire M."/>
            <person name="Lesur I."/>
            <person name="Ma L."/>
            <person name="Muller H."/>
            <person name="Nicaud J.-M."/>
            <person name="Nikolski M."/>
            <person name="Oztas S."/>
            <person name="Ozier-Kalogeropoulos O."/>
            <person name="Pellenz S."/>
            <person name="Potier S."/>
            <person name="Richard G.-F."/>
            <person name="Straub M.-L."/>
            <person name="Suleau A."/>
            <person name="Swennen D."/>
            <person name="Tekaia F."/>
            <person name="Wesolowski-Louvel M."/>
            <person name="Westhof E."/>
            <person name="Wirth B."/>
            <person name="Zeniou-Meyer M."/>
            <person name="Zivanovic Y."/>
            <person name="Bolotin-Fukuhara M."/>
            <person name="Thierry A."/>
            <person name="Bouchier C."/>
            <person name="Caudron B."/>
            <person name="Scarpelli C."/>
            <person name="Gaillardin C."/>
            <person name="Weissenbach J."/>
            <person name="Wincker P."/>
            <person name="Souciet J.-L."/>
        </authorList>
    </citation>
    <scope>NUCLEOTIDE SEQUENCE [LARGE SCALE GENOMIC DNA]</scope>
    <source>
        <strain>ATCC 8585 / CBS 2359 / DSM 70799 / NBRC 1267 / NRRL Y-1140 / WM37</strain>
    </source>
</reference>
<keyword id="KW-0963">Cytoplasm</keyword>
<keyword id="KW-0378">Hydrolase</keyword>
<keyword id="KW-0464">Manganese</keyword>
<keyword id="KW-0479">Metal-binding</keyword>
<keyword id="KW-0488">Methylation</keyword>
<keyword id="KW-0539">Nucleus</keyword>
<keyword id="KW-0904">Protein phosphatase</keyword>
<keyword id="KW-1185">Reference proteome</keyword>
<protein>
    <recommendedName>
        <fullName>Serine/threonine-protein phosphatase 4 catalytic subunit</fullName>
        <shortName>PP4C</shortName>
        <ecNumber>3.1.3.16</ecNumber>
    </recommendedName>
</protein>